<gene>
    <name type="primary">Adh2</name>
</gene>
<feature type="initiator methionine" description="Removed" evidence="1">
    <location>
        <position position="1"/>
    </location>
</feature>
<feature type="chain" id="PRO_0000054499" description="Alcohol dehydrogenase 2">
    <location>
        <begin position="2"/>
        <end position="254"/>
    </location>
</feature>
<feature type="active site" description="Proton acceptor" evidence="2">
    <location>
        <position position="151"/>
    </location>
</feature>
<feature type="binding site" evidence="1">
    <location>
        <begin position="10"/>
        <end position="33"/>
    </location>
    <ligand>
        <name>NAD(+)</name>
        <dbReference type="ChEBI" id="CHEBI:57540"/>
    </ligand>
</feature>
<feature type="binding site" evidence="1">
    <location>
        <position position="138"/>
    </location>
    <ligand>
        <name>substrate</name>
    </ligand>
</feature>
<comment type="catalytic activity">
    <reaction evidence="2">
        <text>a primary alcohol + NAD(+) = an aldehyde + NADH + H(+)</text>
        <dbReference type="Rhea" id="RHEA:10736"/>
        <dbReference type="ChEBI" id="CHEBI:15378"/>
        <dbReference type="ChEBI" id="CHEBI:15734"/>
        <dbReference type="ChEBI" id="CHEBI:17478"/>
        <dbReference type="ChEBI" id="CHEBI:57540"/>
        <dbReference type="ChEBI" id="CHEBI:57945"/>
        <dbReference type="EC" id="1.1.1.1"/>
    </reaction>
</comment>
<comment type="catalytic activity">
    <reaction evidence="2">
        <text>a secondary alcohol + NAD(+) = a ketone + NADH + H(+)</text>
        <dbReference type="Rhea" id="RHEA:10740"/>
        <dbReference type="ChEBI" id="CHEBI:15378"/>
        <dbReference type="ChEBI" id="CHEBI:17087"/>
        <dbReference type="ChEBI" id="CHEBI:35681"/>
        <dbReference type="ChEBI" id="CHEBI:57540"/>
        <dbReference type="ChEBI" id="CHEBI:57945"/>
        <dbReference type="EC" id="1.1.1.1"/>
    </reaction>
</comment>
<comment type="subunit">
    <text>Homodimer.</text>
</comment>
<comment type="similarity">
    <text evidence="3">Belongs to the short-chain dehydrogenases/reductases (SDR) family.</text>
</comment>
<protein>
    <recommendedName>
        <fullName>Alcohol dehydrogenase 2</fullName>
        <ecNumber>1.1.1.1</ecNumber>
    </recommendedName>
</protein>
<sequence>MVIANKNIIFVAGLGGIGFDTSREIVKSGPKNLVILDRIENPAAIAELKALNPKVTVTFYPYDVTVSVAETTKLLKTIFDKLKTVDILINGAGILDDYQIERTIAVNFTGTVNTTTAIMSFWDKRKGGPGGIIANICSVTGFNAIYQVPVYSASKAAALSFTNSLAKLAPITGVTAYSINPGITVTPLVHKFNSWLDVEPRVAELLLEHPTQTRLQCAQNFVKAIEANQNGAIWKLDLGTLEAIEWTKHWDSHI</sequence>
<name>ADH2_DROWH</name>
<accession>P24267</accession>
<dbReference type="EC" id="1.1.1.1"/>
<dbReference type="EMBL" id="M62851">
    <property type="protein sequence ID" value="AAA28329.1"/>
    <property type="molecule type" value="Genomic_DNA"/>
</dbReference>
<dbReference type="SMR" id="P24267"/>
<dbReference type="GO" id="GO:0005737">
    <property type="term" value="C:cytoplasm"/>
    <property type="evidence" value="ECO:0007669"/>
    <property type="project" value="TreeGrafter"/>
</dbReference>
<dbReference type="GO" id="GO:0004022">
    <property type="term" value="F:alcohol dehydrogenase (NAD+) activity"/>
    <property type="evidence" value="ECO:0007669"/>
    <property type="project" value="UniProtKB-EC"/>
</dbReference>
<dbReference type="GO" id="GO:0006066">
    <property type="term" value="P:alcohol metabolic process"/>
    <property type="evidence" value="ECO:0007669"/>
    <property type="project" value="InterPro"/>
</dbReference>
<dbReference type="CDD" id="cd05323">
    <property type="entry name" value="ADH_SDR_c_like"/>
    <property type="match status" value="1"/>
</dbReference>
<dbReference type="FunFam" id="3.40.50.720:FF:000302">
    <property type="entry name" value="Alcohol dehydrogenase"/>
    <property type="match status" value="1"/>
</dbReference>
<dbReference type="Gene3D" id="3.40.50.720">
    <property type="entry name" value="NAD(P)-binding Rossmann-like Domain"/>
    <property type="match status" value="1"/>
</dbReference>
<dbReference type="InterPro" id="IPR002425">
    <property type="entry name" value="ADH_Drosophila-type"/>
</dbReference>
<dbReference type="InterPro" id="IPR036291">
    <property type="entry name" value="NAD(P)-bd_dom_sf"/>
</dbReference>
<dbReference type="InterPro" id="IPR020904">
    <property type="entry name" value="Sc_DH/Rdtase_CS"/>
</dbReference>
<dbReference type="InterPro" id="IPR002347">
    <property type="entry name" value="SDR_fam"/>
</dbReference>
<dbReference type="PANTHER" id="PTHR44229">
    <property type="entry name" value="15-HYDROXYPROSTAGLANDIN DEHYDROGENASE [NAD(+)]"/>
    <property type="match status" value="1"/>
</dbReference>
<dbReference type="PANTHER" id="PTHR44229:SF8">
    <property type="entry name" value="ALCOHOL DEHYDROGENASE-RELATED"/>
    <property type="match status" value="1"/>
</dbReference>
<dbReference type="Pfam" id="PF00106">
    <property type="entry name" value="adh_short"/>
    <property type="match status" value="1"/>
</dbReference>
<dbReference type="PRINTS" id="PR01168">
    <property type="entry name" value="ALCDHDRGNASE"/>
</dbReference>
<dbReference type="PRINTS" id="PR01167">
    <property type="entry name" value="INSADHFAMILY"/>
</dbReference>
<dbReference type="PRINTS" id="PR00080">
    <property type="entry name" value="SDRFAMILY"/>
</dbReference>
<dbReference type="SUPFAM" id="SSF51735">
    <property type="entry name" value="NAD(P)-binding Rossmann-fold domains"/>
    <property type="match status" value="1"/>
</dbReference>
<dbReference type="PROSITE" id="PS00061">
    <property type="entry name" value="ADH_SHORT"/>
    <property type="match status" value="1"/>
</dbReference>
<proteinExistence type="inferred from homology"/>
<organism>
    <name type="scientific">Drosophila wheeleri</name>
    <name type="common">Fruit fly</name>
    <dbReference type="NCBI Taxonomy" id="7277"/>
    <lineage>
        <taxon>Eukaryota</taxon>
        <taxon>Metazoa</taxon>
        <taxon>Ecdysozoa</taxon>
        <taxon>Arthropoda</taxon>
        <taxon>Hexapoda</taxon>
        <taxon>Insecta</taxon>
        <taxon>Pterygota</taxon>
        <taxon>Neoptera</taxon>
        <taxon>Endopterygota</taxon>
        <taxon>Diptera</taxon>
        <taxon>Brachycera</taxon>
        <taxon>Muscomorpha</taxon>
        <taxon>Ephydroidea</taxon>
        <taxon>Drosophilidae</taxon>
        <taxon>Drosophila</taxon>
    </lineage>
</organism>
<keyword id="KW-0520">NAD</keyword>
<keyword id="KW-0560">Oxidoreductase</keyword>
<reference key="1">
    <citation type="submission" date="1991-07" db="EMBL/GenBank/DDBJ databases">
        <authorList>
            <person name="Dorit R.L."/>
            <person name="Ayala F.J. III"/>
            <person name="Gilbert W."/>
        </authorList>
    </citation>
    <scope>NUCLEOTIDE SEQUENCE [GENOMIC DNA]</scope>
</reference>
<evidence type="ECO:0000250" key="1"/>
<evidence type="ECO:0000255" key="2">
    <source>
        <dbReference type="PROSITE-ProRule" id="PRU10001"/>
    </source>
</evidence>
<evidence type="ECO:0000305" key="3"/>